<reference key="1">
    <citation type="journal article" date="1997" name="Nature">
        <title>The nucleotide sequence of Saccharomyces cerevisiae chromosome IV.</title>
        <authorList>
            <person name="Jacq C."/>
            <person name="Alt-Moerbe J."/>
            <person name="Andre B."/>
            <person name="Arnold W."/>
            <person name="Bahr A."/>
            <person name="Ballesta J.P.G."/>
            <person name="Bargues M."/>
            <person name="Baron L."/>
            <person name="Becker A."/>
            <person name="Biteau N."/>
            <person name="Bloecker H."/>
            <person name="Blugeon C."/>
            <person name="Boskovic J."/>
            <person name="Brandt P."/>
            <person name="Brueckner M."/>
            <person name="Buitrago M.J."/>
            <person name="Coster F."/>
            <person name="Delaveau T."/>
            <person name="del Rey F."/>
            <person name="Dujon B."/>
            <person name="Eide L.G."/>
            <person name="Garcia-Cantalejo J.M."/>
            <person name="Goffeau A."/>
            <person name="Gomez-Peris A."/>
            <person name="Granotier C."/>
            <person name="Hanemann V."/>
            <person name="Hankeln T."/>
            <person name="Hoheisel J.D."/>
            <person name="Jaeger W."/>
            <person name="Jimenez A."/>
            <person name="Jonniaux J.-L."/>
            <person name="Kraemer C."/>
            <person name="Kuester H."/>
            <person name="Laamanen P."/>
            <person name="Legros Y."/>
            <person name="Louis E.J."/>
            <person name="Moeller-Rieker S."/>
            <person name="Monnet A."/>
            <person name="Moro M."/>
            <person name="Mueller-Auer S."/>
            <person name="Nussbaumer B."/>
            <person name="Paricio N."/>
            <person name="Paulin L."/>
            <person name="Perea J."/>
            <person name="Perez-Alonso M."/>
            <person name="Perez-Ortin J.E."/>
            <person name="Pohl T.M."/>
            <person name="Prydz H."/>
            <person name="Purnelle B."/>
            <person name="Rasmussen S.W."/>
            <person name="Remacha M.A."/>
            <person name="Revuelta J.L."/>
            <person name="Rieger M."/>
            <person name="Salom D."/>
            <person name="Saluz H.P."/>
            <person name="Saiz J.E."/>
            <person name="Saren A.-M."/>
            <person name="Schaefer M."/>
            <person name="Scharfe M."/>
            <person name="Schmidt E.R."/>
            <person name="Schneider C."/>
            <person name="Scholler P."/>
            <person name="Schwarz S."/>
            <person name="Soler-Mira A."/>
            <person name="Urrestarazu L.A."/>
            <person name="Verhasselt P."/>
            <person name="Vissers S."/>
            <person name="Voet M."/>
            <person name="Volckaert G."/>
            <person name="Wagner G."/>
            <person name="Wambutt R."/>
            <person name="Wedler E."/>
            <person name="Wedler H."/>
            <person name="Woelfl S."/>
            <person name="Harris D.E."/>
            <person name="Bowman S."/>
            <person name="Brown D."/>
            <person name="Churcher C.M."/>
            <person name="Connor R."/>
            <person name="Dedman K."/>
            <person name="Gentles S."/>
            <person name="Hamlin N."/>
            <person name="Hunt S."/>
            <person name="Jones L."/>
            <person name="McDonald S."/>
            <person name="Murphy L.D."/>
            <person name="Niblett D."/>
            <person name="Odell C."/>
            <person name="Oliver K."/>
            <person name="Rajandream M.A."/>
            <person name="Richards C."/>
            <person name="Shore L."/>
            <person name="Walsh S.V."/>
            <person name="Barrell B.G."/>
            <person name="Dietrich F.S."/>
            <person name="Mulligan J.T."/>
            <person name="Allen E."/>
            <person name="Araujo R."/>
            <person name="Aviles E."/>
            <person name="Berno A."/>
            <person name="Carpenter J."/>
            <person name="Chen E."/>
            <person name="Cherry J.M."/>
            <person name="Chung E."/>
            <person name="Duncan M."/>
            <person name="Hunicke-Smith S."/>
            <person name="Hyman R.W."/>
            <person name="Komp C."/>
            <person name="Lashkari D."/>
            <person name="Lew H."/>
            <person name="Lin D."/>
            <person name="Mosedale D."/>
            <person name="Nakahara K."/>
            <person name="Namath A."/>
            <person name="Oefner P."/>
            <person name="Oh C."/>
            <person name="Petel F.X."/>
            <person name="Roberts D."/>
            <person name="Schramm S."/>
            <person name="Schroeder M."/>
            <person name="Shogren T."/>
            <person name="Shroff N."/>
            <person name="Winant A."/>
            <person name="Yelton M.A."/>
            <person name="Botstein D."/>
            <person name="Davis R.W."/>
            <person name="Johnston M."/>
            <person name="Andrews S."/>
            <person name="Brinkman R."/>
            <person name="Cooper J."/>
            <person name="Ding H."/>
            <person name="Du Z."/>
            <person name="Favello A."/>
            <person name="Fulton L."/>
            <person name="Gattung S."/>
            <person name="Greco T."/>
            <person name="Hallsworth K."/>
            <person name="Hawkins J."/>
            <person name="Hillier L.W."/>
            <person name="Jier M."/>
            <person name="Johnson D."/>
            <person name="Johnston L."/>
            <person name="Kirsten J."/>
            <person name="Kucaba T."/>
            <person name="Langston Y."/>
            <person name="Latreille P."/>
            <person name="Le T."/>
            <person name="Mardis E."/>
            <person name="Menezes S."/>
            <person name="Miller N."/>
            <person name="Nhan M."/>
            <person name="Pauley A."/>
            <person name="Peluso D."/>
            <person name="Rifkin L."/>
            <person name="Riles L."/>
            <person name="Taich A."/>
            <person name="Trevaskis E."/>
            <person name="Vignati D."/>
            <person name="Wilcox L."/>
            <person name="Wohldman P."/>
            <person name="Vaudin M."/>
            <person name="Wilson R."/>
            <person name="Waterston R."/>
            <person name="Albermann K."/>
            <person name="Hani J."/>
            <person name="Heumann K."/>
            <person name="Kleine K."/>
            <person name="Mewes H.-W."/>
            <person name="Zollner A."/>
            <person name="Zaccaria P."/>
        </authorList>
    </citation>
    <scope>NUCLEOTIDE SEQUENCE [LARGE SCALE GENOMIC DNA]</scope>
    <source>
        <strain>ATCC 204508 / S288c</strain>
    </source>
</reference>
<reference key="2">
    <citation type="journal article" date="2014" name="G3 (Bethesda)">
        <title>The reference genome sequence of Saccharomyces cerevisiae: Then and now.</title>
        <authorList>
            <person name="Engel S.R."/>
            <person name="Dietrich F.S."/>
            <person name="Fisk D.G."/>
            <person name="Binkley G."/>
            <person name="Balakrishnan R."/>
            <person name="Costanzo M.C."/>
            <person name="Dwight S.S."/>
            <person name="Hitz B.C."/>
            <person name="Karra K."/>
            <person name="Nash R.S."/>
            <person name="Weng S."/>
            <person name="Wong E.D."/>
            <person name="Lloyd P."/>
            <person name="Skrzypek M.S."/>
            <person name="Miyasato S.R."/>
            <person name="Simison M."/>
            <person name="Cherry J.M."/>
        </authorList>
    </citation>
    <scope>GENOME REANNOTATION</scope>
    <source>
        <strain>ATCC 204508 / S288c</strain>
    </source>
</reference>
<reference key="3">
    <citation type="journal article" date="2003" name="Nature">
        <title>Global analysis of protein expression in yeast.</title>
        <authorList>
            <person name="Ghaemmaghami S."/>
            <person name="Huh W.-K."/>
            <person name="Bower K."/>
            <person name="Howson R.W."/>
            <person name="Belle A."/>
            <person name="Dephoure N."/>
            <person name="O'Shea E.K."/>
            <person name="Weissman J.S."/>
        </authorList>
    </citation>
    <scope>LEVEL OF PROTEIN EXPRESSION [LARGE SCALE ANALYSIS]</scope>
</reference>
<reference key="4">
    <citation type="journal article" date="2003" name="Nature">
        <title>Global analysis of protein localization in budding yeast.</title>
        <authorList>
            <person name="Huh W.-K."/>
            <person name="Falvo J.V."/>
            <person name="Gerke L.C."/>
            <person name="Carroll A.S."/>
            <person name="Howson R.W."/>
            <person name="Weissman J.S."/>
            <person name="O'Shea E.K."/>
        </authorList>
    </citation>
    <scope>SUBCELLULAR LOCATION [LARGE SCALE ANALYSIS]</scope>
</reference>
<reference key="5">
    <citation type="journal article" date="2012" name="Science">
        <title>Synchronizing nuclear import of ribosomal proteins with ribosome assembly.</title>
        <authorList>
            <person name="Kressler D."/>
            <person name="Bange G."/>
            <person name="Ogawa Y."/>
            <person name="Stjepanovic G."/>
            <person name="Bradatsch B."/>
            <person name="Pratte D."/>
            <person name="Amlacher S."/>
            <person name="Strauss D."/>
            <person name="Yoneda Y."/>
            <person name="Katahira J."/>
            <person name="Sinning I."/>
            <person name="Hurt E."/>
        </authorList>
    </citation>
    <scope>INTERACTION WITH RPL5; RPL11A AND RPL11B</scope>
    <scope>SUBCELLULAR LOCATION</scope>
    <scope>FUNCTION</scope>
</reference>
<reference key="6">
    <citation type="journal article" date="2023" name="Nat. Struct. Mol. Biol.">
        <title>Structure of nascent 5S RNPs at the crossroad between ribosome assembly and MDM2-p53 pathways.</title>
        <authorList>
            <person name="Castillo Duque de Estrada N.M."/>
            <person name="Thoms M."/>
            <person name="Flemming D."/>
            <person name="Hammaren H.M."/>
            <person name="Buschauer R."/>
            <person name="Ameismeier M."/>
            <person name="Bassler J."/>
            <person name="Beck M."/>
            <person name="Beckmann R."/>
            <person name="Hurt E."/>
        </authorList>
    </citation>
    <scope>SUBUNIT</scope>
</reference>
<proteinExistence type="evidence at protein level"/>
<accession>Q07395</accession>
<accession>D6VRT4</accession>
<accession>P89893</accession>
<accession>Q7LGT0</accession>
<organism>
    <name type="scientific">Saccharomyces cerevisiae (strain ATCC 204508 / S288c)</name>
    <name type="common">Baker's yeast</name>
    <dbReference type="NCBI Taxonomy" id="559292"/>
    <lineage>
        <taxon>Eukaryota</taxon>
        <taxon>Fungi</taxon>
        <taxon>Dikarya</taxon>
        <taxon>Ascomycota</taxon>
        <taxon>Saccharomycotina</taxon>
        <taxon>Saccharomycetes</taxon>
        <taxon>Saccharomycetales</taxon>
        <taxon>Saccharomycetaceae</taxon>
        <taxon>Saccharomyces</taxon>
    </lineage>
</organism>
<protein>
    <recommendedName>
        <fullName>Synchronized import protein 1</fullName>
    </recommendedName>
    <alternativeName>
        <fullName>Symportin 1</fullName>
    </alternativeName>
</protein>
<evidence type="ECO:0000256" key="1">
    <source>
        <dbReference type="SAM" id="MobiDB-lite"/>
    </source>
</evidence>
<evidence type="ECO:0000269" key="2">
    <source>
    </source>
</evidence>
<evidence type="ECO:0000269" key="3">
    <source>
    </source>
</evidence>
<evidence type="ECO:0000269" key="4">
    <source>
    </source>
</evidence>
<evidence type="ECO:0000305" key="5"/>
<keyword id="KW-0963">Cytoplasm</keyword>
<keyword id="KW-0539">Nucleus</keyword>
<keyword id="KW-0653">Protein transport</keyword>
<keyword id="KW-1185">Reference proteome</keyword>
<keyword id="KW-0677">Repeat</keyword>
<keyword id="KW-0690">Ribosome biogenesis</keyword>
<keyword id="KW-0813">Transport</keyword>
<sequence length="620" mass="70164">MGRSKKRSRASSSRLNPLRKAGSNDNNKDTNVVNKKLQPLLQNLSSVVPNDRSIALSSISVLCEDAHMRQLLLKEKLVPIILNKLLNDSNSDIVVESFGLLRNLSLEEGYDVSIYLWRSDIWTSITSNFGRIVESLSALQAAEQQPQLKPAGKSKIESKRLLFDFADNLLSLVVALSNGSDDILNEILTESKINEIFQVISQLLKYGVEKLPINLFNTTLDLIYDLSSESFEFIDHVSNNELLSQFLNGLSPALHPQANELTKVLIEGIHCQFLDMKITYDQCNKMIHSVCHSINNIDPVQLVNDINNPVEIGPATSKDESSKVITKIKDYNAKRNESMIKLQSIEIAIDLITAIIEIVASKYESPESQEVAIPEELINTLTNFLPHVFMILKDTFTSRILIGWNNLIWLFVSLSLTELSGELLTTLWSYVTQLDSQDDLSIKIGRMGCIWALLKLIFPDGAFESENRALINVQMLNNSGFARGIIEEFQNNNDLELQQKCINVLSTYAMIQGQIDANKEIGQFFIQTLTQLNVRPEILIEMTNSLFQIYGDASYDYNEPIFVRGGFLSILKDQVVPNLRQQFKMVDKNKNPELKERCHDCFTTLDSFIHYKMNENSTNQ</sequence>
<feature type="chain" id="PRO_0000248459" description="Synchronized import protein 1">
    <location>
        <begin position="1"/>
        <end position="620"/>
    </location>
</feature>
<feature type="repeat" description="ARM 1">
    <location>
        <begin position="25"/>
        <end position="64"/>
    </location>
</feature>
<feature type="repeat" description="ARM 2">
    <location>
        <begin position="66"/>
        <end position="106"/>
    </location>
</feature>
<feature type="repeat" description="ARM 3">
    <location>
        <begin position="181"/>
        <end position="221"/>
    </location>
</feature>
<feature type="repeat" description="ARM 4">
    <location>
        <begin position="258"/>
        <end position="299"/>
    </location>
</feature>
<feature type="repeat" description="ARM 5">
    <location>
        <begin position="340"/>
        <end position="386"/>
    </location>
</feature>
<feature type="repeat" description="ARM 6">
    <location>
        <begin position="435"/>
        <end position="470"/>
    </location>
</feature>
<feature type="repeat" description="ARM 7">
    <location>
        <begin position="471"/>
        <end position="510"/>
    </location>
</feature>
<feature type="repeat" description="ARM 8">
    <location>
        <begin position="564"/>
        <end position="607"/>
    </location>
</feature>
<feature type="region of interest" description="Disordered" evidence="1">
    <location>
        <begin position="1"/>
        <end position="32"/>
    </location>
</feature>
<gene>
    <name type="primary">SYO1</name>
    <name type="ordered locus">YDL063C</name>
</gene>
<name>SYO1_YEAST</name>
<comment type="function">
    <text evidence="3">Nuclear import adapter that specifically recruits the two functionally and topologically linked ribosomal proteins RPL5 and RPL11 (encoded by RPL11A and RPL11B). Guarantees that this cargo pair remains bound together from the time of synthesis in the cytoplasm until delivery to the nascent 5S rRNA in the nucleus.</text>
</comment>
<comment type="subunit">
    <text evidence="3 4">Forms a heterotrimeric complex with RPL5 and RPL11A or RPL11B; interaction of this complex with KAP104 allows the nuclear import of the heterotrimer (PubMed:23118189). Component of a hexameric 5S RNP precursor complex, composed of 5S RNA, RRS1, RPF2, RPL5, RPL11A/RPL11B and SYO1; this complex acts as a precursor for ribosome assembly (PubMed:37291423).</text>
</comment>
<comment type="subcellular location">
    <subcellularLocation>
        <location>Cytoplasm</location>
    </subcellularLocation>
    <subcellularLocation>
        <location>Nucleus</location>
    </subcellularLocation>
    <text>The SYO1/RPL11/RPL5 complex is transported into the nucleus by KAP104.</text>
</comment>
<comment type="miscellaneous">
    <text evidence="2">Present with 2600 molecules/cell in log phase SD medium.</text>
</comment>
<comment type="similarity">
    <text evidence="5">Belongs to the nuclear import and ribosome assembly adapter family.</text>
</comment>
<dbReference type="EMBL" id="Z74111">
    <property type="protein sequence ID" value="CAA98627.1"/>
    <property type="molecule type" value="Genomic_DNA"/>
</dbReference>
<dbReference type="EMBL" id="Z74109">
    <property type="protein sequence ID" value="CAA98625.1"/>
    <property type="molecule type" value="Genomic_DNA"/>
</dbReference>
<dbReference type="EMBL" id="BK006938">
    <property type="protein sequence ID" value="DAA11794.1"/>
    <property type="molecule type" value="Genomic_DNA"/>
</dbReference>
<dbReference type="PIR" id="S67598">
    <property type="entry name" value="S67598"/>
</dbReference>
<dbReference type="RefSeq" id="NP_010220.1">
    <property type="nucleotide sequence ID" value="NM_001180122.1"/>
</dbReference>
<dbReference type="SMR" id="Q07395"/>
<dbReference type="BioGRID" id="31996">
    <property type="interactions" value="76"/>
</dbReference>
<dbReference type="DIP" id="DIP-1789N"/>
<dbReference type="FunCoup" id="Q07395">
    <property type="interactions" value="298"/>
</dbReference>
<dbReference type="IntAct" id="Q07395">
    <property type="interactions" value="4"/>
</dbReference>
<dbReference type="MINT" id="Q07395"/>
<dbReference type="STRING" id="4932.YDL063C"/>
<dbReference type="iPTMnet" id="Q07395"/>
<dbReference type="PaxDb" id="4932-YDL063C"/>
<dbReference type="PeptideAtlas" id="Q07395"/>
<dbReference type="EnsemblFungi" id="YDL063C_mRNA">
    <property type="protein sequence ID" value="YDL063C"/>
    <property type="gene ID" value="YDL063C"/>
</dbReference>
<dbReference type="GeneID" id="851497"/>
<dbReference type="KEGG" id="sce:YDL063C"/>
<dbReference type="AGR" id="SGD:S000002221"/>
<dbReference type="SGD" id="S000002221">
    <property type="gene designation" value="SYO1"/>
</dbReference>
<dbReference type="VEuPathDB" id="FungiDB:YDL063C"/>
<dbReference type="eggNOG" id="ENOG502RYAI">
    <property type="taxonomic scope" value="Eukaryota"/>
</dbReference>
<dbReference type="GeneTree" id="ENSGT00390000012529"/>
<dbReference type="HOGENOM" id="CLU_446315_0_0_1"/>
<dbReference type="InParanoid" id="Q07395"/>
<dbReference type="OMA" id="ADMDMVT"/>
<dbReference type="OrthoDB" id="288703at2759"/>
<dbReference type="BioCyc" id="YEAST:G3O-29478-MONOMER"/>
<dbReference type="BioGRID-ORCS" id="851497">
    <property type="hits" value="9 hits in 10 CRISPR screens"/>
</dbReference>
<dbReference type="PRO" id="PR:Q07395"/>
<dbReference type="Proteomes" id="UP000002311">
    <property type="component" value="Chromosome IV"/>
</dbReference>
<dbReference type="RNAct" id="Q07395">
    <property type="molecule type" value="protein"/>
</dbReference>
<dbReference type="GO" id="GO:0005737">
    <property type="term" value="C:cytoplasm"/>
    <property type="evidence" value="ECO:0007005"/>
    <property type="project" value="SGD"/>
</dbReference>
<dbReference type="GO" id="GO:0005634">
    <property type="term" value="C:nucleus"/>
    <property type="evidence" value="ECO:0007005"/>
    <property type="project" value="SGD"/>
</dbReference>
<dbReference type="GO" id="GO:0051082">
    <property type="term" value="F:unfolded protein binding"/>
    <property type="evidence" value="ECO:0000314"/>
    <property type="project" value="SGD"/>
</dbReference>
<dbReference type="GO" id="GO:0006606">
    <property type="term" value="P:protein import into nucleus"/>
    <property type="evidence" value="ECO:0000316"/>
    <property type="project" value="SGD"/>
</dbReference>
<dbReference type="GO" id="GO:0042273">
    <property type="term" value="P:ribosomal large subunit biogenesis"/>
    <property type="evidence" value="ECO:0000315"/>
    <property type="project" value="SGD"/>
</dbReference>
<dbReference type="CDD" id="cd13394">
    <property type="entry name" value="Syo1_like"/>
    <property type="match status" value="1"/>
</dbReference>
<dbReference type="FunFam" id="1.25.10.10:FF:000772">
    <property type="entry name" value="YDL063C-like protein"/>
    <property type="match status" value="1"/>
</dbReference>
<dbReference type="Gene3D" id="1.25.10.10">
    <property type="entry name" value="Leucine-rich Repeat Variant"/>
    <property type="match status" value="1"/>
</dbReference>
<dbReference type="InterPro" id="IPR011989">
    <property type="entry name" value="ARM-like"/>
</dbReference>
<dbReference type="InterPro" id="IPR016024">
    <property type="entry name" value="ARM-type_fold"/>
</dbReference>
<dbReference type="InterPro" id="IPR052616">
    <property type="entry name" value="Nuclear_Import_Ribosome_Adapt"/>
</dbReference>
<dbReference type="PANTHER" id="PTHR13347">
    <property type="entry name" value="HEAT REPEAT-CONTAINING PROTEIN 3"/>
    <property type="match status" value="1"/>
</dbReference>
<dbReference type="PANTHER" id="PTHR13347:SF1">
    <property type="entry name" value="HEAT REPEAT-CONTAINING PROTEIN 3"/>
    <property type="match status" value="1"/>
</dbReference>
<dbReference type="SUPFAM" id="SSF48371">
    <property type="entry name" value="ARM repeat"/>
    <property type="match status" value="1"/>
</dbReference>